<keyword id="KW-0067">ATP-binding</keyword>
<keyword id="KW-0143">Chaperone</keyword>
<keyword id="KW-0963">Cytoplasm</keyword>
<keyword id="KW-0413">Isomerase</keyword>
<keyword id="KW-0547">Nucleotide-binding</keyword>
<keyword id="KW-1185">Reference proteome</keyword>
<comment type="function">
    <text evidence="1">Together with its co-chaperonin GroES, plays an essential role in assisting protein folding. The GroEL-GroES system forms a nano-cage that allows encapsulation of the non-native substrate proteins and provides a physical environment optimized to promote and accelerate protein folding.</text>
</comment>
<comment type="catalytic activity">
    <reaction evidence="1">
        <text>ATP + H2O + a folded polypeptide = ADP + phosphate + an unfolded polypeptide.</text>
        <dbReference type="EC" id="5.6.1.7"/>
    </reaction>
</comment>
<comment type="subunit">
    <text evidence="1">Forms a cylinder of 14 subunits composed of two heptameric rings stacked back-to-back. Interacts with the co-chaperonin GroES.</text>
</comment>
<comment type="subcellular location">
    <subcellularLocation>
        <location evidence="1">Cytoplasm</location>
    </subcellularLocation>
</comment>
<comment type="similarity">
    <text evidence="1">Belongs to the chaperonin (HSP60) family.</text>
</comment>
<accession>Q1QP32</accession>
<proteinExistence type="inferred from homology"/>
<name>CH601_NITHX</name>
<feature type="chain" id="PRO_0000256933" description="Chaperonin GroEL 1">
    <location>
        <begin position="1"/>
        <end position="545"/>
    </location>
</feature>
<feature type="binding site" evidence="1">
    <location>
        <begin position="30"/>
        <end position="33"/>
    </location>
    <ligand>
        <name>ATP</name>
        <dbReference type="ChEBI" id="CHEBI:30616"/>
    </ligand>
</feature>
<feature type="binding site" evidence="1">
    <location>
        <position position="51"/>
    </location>
    <ligand>
        <name>ATP</name>
        <dbReference type="ChEBI" id="CHEBI:30616"/>
    </ligand>
</feature>
<feature type="binding site" evidence="1">
    <location>
        <begin position="87"/>
        <end position="91"/>
    </location>
    <ligand>
        <name>ATP</name>
        <dbReference type="ChEBI" id="CHEBI:30616"/>
    </ligand>
</feature>
<feature type="binding site" evidence="1">
    <location>
        <position position="415"/>
    </location>
    <ligand>
        <name>ATP</name>
        <dbReference type="ChEBI" id="CHEBI:30616"/>
    </ligand>
</feature>
<feature type="binding site" evidence="1">
    <location>
        <position position="496"/>
    </location>
    <ligand>
        <name>ATP</name>
        <dbReference type="ChEBI" id="CHEBI:30616"/>
    </ligand>
</feature>
<protein>
    <recommendedName>
        <fullName evidence="1">Chaperonin GroEL 1</fullName>
        <ecNumber evidence="1">5.6.1.7</ecNumber>
    </recommendedName>
    <alternativeName>
        <fullName evidence="1">60 kDa chaperonin 1</fullName>
    </alternativeName>
    <alternativeName>
        <fullName evidence="1">Chaperonin-60 1</fullName>
        <shortName evidence="1">Cpn60 1</shortName>
    </alternativeName>
</protein>
<reference key="1">
    <citation type="submission" date="2006-03" db="EMBL/GenBank/DDBJ databases">
        <title>Complete sequence of chromosome of Nitrobacter hamburgensis X14.</title>
        <authorList>
            <consortium name="US DOE Joint Genome Institute"/>
            <person name="Copeland A."/>
            <person name="Lucas S."/>
            <person name="Lapidus A."/>
            <person name="Barry K."/>
            <person name="Detter J.C."/>
            <person name="Glavina del Rio T."/>
            <person name="Hammon N."/>
            <person name="Israni S."/>
            <person name="Dalin E."/>
            <person name="Tice H."/>
            <person name="Pitluck S."/>
            <person name="Chain P."/>
            <person name="Malfatti S."/>
            <person name="Shin M."/>
            <person name="Vergez L."/>
            <person name="Schmutz J."/>
            <person name="Larimer F."/>
            <person name="Land M."/>
            <person name="Hauser L."/>
            <person name="Kyrpides N."/>
            <person name="Ivanova N."/>
            <person name="Ward B."/>
            <person name="Arp D."/>
            <person name="Klotz M."/>
            <person name="Stein L."/>
            <person name="O'Mullan G."/>
            <person name="Starkenburg S."/>
            <person name="Sayavedra L."/>
            <person name="Poret-Peterson A.T."/>
            <person name="Gentry M.E."/>
            <person name="Bruce D."/>
            <person name="Richardson P."/>
        </authorList>
    </citation>
    <scope>NUCLEOTIDE SEQUENCE [LARGE SCALE GENOMIC DNA]</scope>
    <source>
        <strain>DSM 10229 / NCIMB 13809 / X14</strain>
    </source>
</reference>
<evidence type="ECO:0000255" key="1">
    <source>
        <dbReference type="HAMAP-Rule" id="MF_00600"/>
    </source>
</evidence>
<dbReference type="EC" id="5.6.1.7" evidence="1"/>
<dbReference type="EMBL" id="CP000319">
    <property type="protein sequence ID" value="ABE62015.1"/>
    <property type="molecule type" value="Genomic_DNA"/>
</dbReference>
<dbReference type="RefSeq" id="WP_011509708.1">
    <property type="nucleotide sequence ID" value="NC_007964.1"/>
</dbReference>
<dbReference type="SMR" id="Q1QP32"/>
<dbReference type="STRING" id="323097.Nham_1176"/>
<dbReference type="KEGG" id="nha:Nham_1176"/>
<dbReference type="eggNOG" id="COG0459">
    <property type="taxonomic scope" value="Bacteria"/>
</dbReference>
<dbReference type="HOGENOM" id="CLU_016503_3_0_5"/>
<dbReference type="OrthoDB" id="9766614at2"/>
<dbReference type="Proteomes" id="UP000001953">
    <property type="component" value="Chromosome"/>
</dbReference>
<dbReference type="GO" id="GO:0005737">
    <property type="term" value="C:cytoplasm"/>
    <property type="evidence" value="ECO:0007669"/>
    <property type="project" value="UniProtKB-SubCell"/>
</dbReference>
<dbReference type="GO" id="GO:0005524">
    <property type="term" value="F:ATP binding"/>
    <property type="evidence" value="ECO:0007669"/>
    <property type="project" value="UniProtKB-UniRule"/>
</dbReference>
<dbReference type="GO" id="GO:0140662">
    <property type="term" value="F:ATP-dependent protein folding chaperone"/>
    <property type="evidence" value="ECO:0007669"/>
    <property type="project" value="InterPro"/>
</dbReference>
<dbReference type="GO" id="GO:0016853">
    <property type="term" value="F:isomerase activity"/>
    <property type="evidence" value="ECO:0007669"/>
    <property type="project" value="UniProtKB-KW"/>
</dbReference>
<dbReference type="GO" id="GO:0051082">
    <property type="term" value="F:unfolded protein binding"/>
    <property type="evidence" value="ECO:0007669"/>
    <property type="project" value="UniProtKB-UniRule"/>
</dbReference>
<dbReference type="GO" id="GO:0042026">
    <property type="term" value="P:protein refolding"/>
    <property type="evidence" value="ECO:0007669"/>
    <property type="project" value="UniProtKB-UniRule"/>
</dbReference>
<dbReference type="CDD" id="cd03344">
    <property type="entry name" value="GroEL"/>
    <property type="match status" value="1"/>
</dbReference>
<dbReference type="FunFam" id="1.10.560.10:FF:000001">
    <property type="entry name" value="60 kDa chaperonin"/>
    <property type="match status" value="1"/>
</dbReference>
<dbReference type="FunFam" id="3.50.7.10:FF:000001">
    <property type="entry name" value="60 kDa chaperonin"/>
    <property type="match status" value="1"/>
</dbReference>
<dbReference type="Gene3D" id="3.50.7.10">
    <property type="entry name" value="GroEL"/>
    <property type="match status" value="1"/>
</dbReference>
<dbReference type="Gene3D" id="1.10.560.10">
    <property type="entry name" value="GroEL-like equatorial domain"/>
    <property type="match status" value="1"/>
</dbReference>
<dbReference type="Gene3D" id="3.30.260.10">
    <property type="entry name" value="TCP-1-like chaperonin intermediate domain"/>
    <property type="match status" value="1"/>
</dbReference>
<dbReference type="HAMAP" id="MF_00600">
    <property type="entry name" value="CH60"/>
    <property type="match status" value="1"/>
</dbReference>
<dbReference type="InterPro" id="IPR018370">
    <property type="entry name" value="Chaperonin_Cpn60_CS"/>
</dbReference>
<dbReference type="InterPro" id="IPR001844">
    <property type="entry name" value="Cpn60/GroEL"/>
</dbReference>
<dbReference type="InterPro" id="IPR002423">
    <property type="entry name" value="Cpn60/GroEL/TCP-1"/>
</dbReference>
<dbReference type="InterPro" id="IPR027409">
    <property type="entry name" value="GroEL-like_apical_dom_sf"/>
</dbReference>
<dbReference type="InterPro" id="IPR027413">
    <property type="entry name" value="GROEL-like_equatorial_sf"/>
</dbReference>
<dbReference type="InterPro" id="IPR027410">
    <property type="entry name" value="TCP-1-like_intermed_sf"/>
</dbReference>
<dbReference type="NCBIfam" id="TIGR02348">
    <property type="entry name" value="GroEL"/>
    <property type="match status" value="1"/>
</dbReference>
<dbReference type="NCBIfam" id="NF000592">
    <property type="entry name" value="PRK00013.1"/>
    <property type="match status" value="1"/>
</dbReference>
<dbReference type="NCBIfam" id="NF009487">
    <property type="entry name" value="PRK12849.1"/>
    <property type="match status" value="1"/>
</dbReference>
<dbReference type="NCBIfam" id="NF009488">
    <property type="entry name" value="PRK12850.1"/>
    <property type="match status" value="1"/>
</dbReference>
<dbReference type="NCBIfam" id="NF009489">
    <property type="entry name" value="PRK12851.1"/>
    <property type="match status" value="1"/>
</dbReference>
<dbReference type="NCBIfam" id="NF010704">
    <property type="entry name" value="PRK14104.1"/>
    <property type="match status" value="1"/>
</dbReference>
<dbReference type="PANTHER" id="PTHR45633">
    <property type="entry name" value="60 KDA HEAT SHOCK PROTEIN, MITOCHONDRIAL"/>
    <property type="match status" value="1"/>
</dbReference>
<dbReference type="Pfam" id="PF00118">
    <property type="entry name" value="Cpn60_TCP1"/>
    <property type="match status" value="1"/>
</dbReference>
<dbReference type="PRINTS" id="PR00298">
    <property type="entry name" value="CHAPERONIN60"/>
</dbReference>
<dbReference type="SUPFAM" id="SSF52029">
    <property type="entry name" value="GroEL apical domain-like"/>
    <property type="match status" value="1"/>
</dbReference>
<dbReference type="SUPFAM" id="SSF48592">
    <property type="entry name" value="GroEL equatorial domain-like"/>
    <property type="match status" value="1"/>
</dbReference>
<dbReference type="SUPFAM" id="SSF54849">
    <property type="entry name" value="GroEL-intermediate domain like"/>
    <property type="match status" value="1"/>
</dbReference>
<dbReference type="PROSITE" id="PS00296">
    <property type="entry name" value="CHAPERONINS_CPN60"/>
    <property type="match status" value="1"/>
</dbReference>
<gene>
    <name evidence="1" type="primary">groEL1</name>
    <name evidence="1" type="synonym">groL1</name>
    <name type="ordered locus">Nham_1176</name>
</gene>
<organism>
    <name type="scientific">Nitrobacter hamburgensis (strain DSM 10229 / NCIMB 13809 / X14)</name>
    <dbReference type="NCBI Taxonomy" id="323097"/>
    <lineage>
        <taxon>Bacteria</taxon>
        <taxon>Pseudomonadati</taxon>
        <taxon>Pseudomonadota</taxon>
        <taxon>Alphaproteobacteria</taxon>
        <taxon>Hyphomicrobiales</taxon>
        <taxon>Nitrobacteraceae</taxon>
        <taxon>Nitrobacter</taxon>
    </lineage>
</organism>
<sequence length="545" mass="57912">MSAKEVKFGVDARDRMLRGVEILNNAVKVTLGPKGRNVVLDKSYGAPRITKDGVTVAKEIELEDKFENMGAQMVREVASKSADAAGDGTTTATVLAAAIVKEGAKSVAAGMNPMDLKRGIDLAVEAVVADLVRNSKKVTSNEEIAQVGTISSNGDTEIGKFLADAMKKVGNEGVITVEEAKSLETELEIVEGMQFDRGYISPYFVTNADKMRVEMEDAYVLINEKKLSQLNELLPLLEAVVQSGKPLVIIAEDVEGEALATLVVNRLRGGLKVAAVKAPGFGDRRKAMLQDIAILTGGQAISEDLGIKLENVTLAMLGRAKKVMIDKENTTIVSGAGKKADIEARVNQIKAQIEETTSDYDREKLQERLAKLAGGVAVIRVGGATEVEVKERKDRVDDAMHATRAAVEEGIVPGGGVALLRASEQLKRIKTANDDQKTGVEIVRKALSAPARQIAINAGEDGSIIVGKILEKEQYSYGFDSQTGEYVNLISKGIIDPTKVVRAAIQNAASVAALLITTEAMVAELPKKNAAAPAMPGGGMGGMDF</sequence>